<evidence type="ECO:0000250" key="1">
    <source>
        <dbReference type="UniProtKB" id="Q5NUF3"/>
    </source>
</evidence>
<evidence type="ECO:0000255" key="2">
    <source>
        <dbReference type="HAMAP-Rule" id="MF_01958"/>
    </source>
</evidence>
<proteinExistence type="inferred from homology"/>
<accession>Q1RF59</accession>
<comment type="function">
    <text evidence="2">Displays esterase activity towards short chain fatty esters (acyl chain length of up to 8 carbons). Able to hydrolyze triacetylglycerol (triacetin) and tributyrylglycerol (tributyrin), but not trioleylglycerol (triolein) or cholesterol oleate. Negatively regulates MalT activity by antagonizing maltotriose binding. Inhibits MelA galactosidase activity.</text>
</comment>
<comment type="subunit">
    <text evidence="2">Homodimer. Interacts with MalT and MelA.</text>
</comment>
<comment type="subcellular location">
    <subcellularLocation>
        <location evidence="2">Cytoplasm</location>
    </subcellularLocation>
</comment>
<comment type="similarity">
    <text evidence="2">Belongs to the 'GDXG' lipolytic enzyme family.</text>
</comment>
<protein>
    <recommendedName>
        <fullName evidence="2">Acetyl esterase</fullName>
        <ecNumber evidence="2">3.1.1.-</ecNumber>
    </recommendedName>
</protein>
<organism>
    <name type="scientific">Escherichia coli (strain UTI89 / UPEC)</name>
    <dbReference type="NCBI Taxonomy" id="364106"/>
    <lineage>
        <taxon>Bacteria</taxon>
        <taxon>Pseudomonadati</taxon>
        <taxon>Pseudomonadota</taxon>
        <taxon>Gammaproteobacteria</taxon>
        <taxon>Enterobacterales</taxon>
        <taxon>Enterobacteriaceae</taxon>
        <taxon>Escherichia</taxon>
    </lineage>
</organism>
<keyword id="KW-0963">Cytoplasm</keyword>
<keyword id="KW-0378">Hydrolase</keyword>
<keyword id="KW-0719">Serine esterase</keyword>
<gene>
    <name evidence="2" type="primary">aes</name>
    <name type="ordered locus">UTI89_C0504</name>
</gene>
<dbReference type="EC" id="3.1.1.-" evidence="2"/>
<dbReference type="EMBL" id="CP000243">
    <property type="protein sequence ID" value="ABE06005.1"/>
    <property type="molecule type" value="Genomic_DNA"/>
</dbReference>
<dbReference type="RefSeq" id="WP_000801795.1">
    <property type="nucleotide sequence ID" value="NZ_CP064825.1"/>
</dbReference>
<dbReference type="SMR" id="Q1RF59"/>
<dbReference type="ESTHER" id="ecoli-Aes">
    <property type="family name" value="Acetyl_esterase"/>
</dbReference>
<dbReference type="MEROPS" id="S09.A47"/>
<dbReference type="KEGG" id="eci:UTI89_C0504"/>
<dbReference type="HOGENOM" id="CLU_012494_6_4_6"/>
<dbReference type="Proteomes" id="UP000001952">
    <property type="component" value="Chromosome"/>
</dbReference>
<dbReference type="GO" id="GO:0005737">
    <property type="term" value="C:cytoplasm"/>
    <property type="evidence" value="ECO:0007669"/>
    <property type="project" value="UniProtKB-SubCell"/>
</dbReference>
<dbReference type="GO" id="GO:0052689">
    <property type="term" value="F:carboxylic ester hydrolase activity"/>
    <property type="evidence" value="ECO:0007669"/>
    <property type="project" value="UniProtKB-UniRule"/>
</dbReference>
<dbReference type="FunFam" id="3.40.50.1820:FF:000035">
    <property type="entry name" value="Acetyl esterase"/>
    <property type="match status" value="1"/>
</dbReference>
<dbReference type="Gene3D" id="3.40.50.1820">
    <property type="entry name" value="alpha/beta hydrolase"/>
    <property type="match status" value="1"/>
</dbReference>
<dbReference type="HAMAP" id="MF_01958">
    <property type="entry name" value="Acetyl_esterase"/>
    <property type="match status" value="1"/>
</dbReference>
<dbReference type="InterPro" id="IPR013094">
    <property type="entry name" value="AB_hydrolase_3"/>
</dbReference>
<dbReference type="InterPro" id="IPR029058">
    <property type="entry name" value="AB_hydrolase_fold"/>
</dbReference>
<dbReference type="InterPro" id="IPR023508">
    <property type="entry name" value="Acetyl_esterase"/>
</dbReference>
<dbReference type="InterPro" id="IPR050300">
    <property type="entry name" value="GDXG_lipolytic_enzyme"/>
</dbReference>
<dbReference type="InterPro" id="IPR002168">
    <property type="entry name" value="Lipase_GDXG_HIS_AS"/>
</dbReference>
<dbReference type="InterPro" id="IPR033140">
    <property type="entry name" value="Lipase_GDXG_put_SER_AS"/>
</dbReference>
<dbReference type="NCBIfam" id="NF007547">
    <property type="entry name" value="PRK10162.1"/>
    <property type="match status" value="1"/>
</dbReference>
<dbReference type="PANTHER" id="PTHR48081">
    <property type="entry name" value="AB HYDROLASE SUPERFAMILY PROTEIN C4A8.06C"/>
    <property type="match status" value="1"/>
</dbReference>
<dbReference type="PANTHER" id="PTHR48081:SF8">
    <property type="entry name" value="ALPHA_BETA HYDROLASE FOLD-3 DOMAIN-CONTAINING PROTEIN-RELATED"/>
    <property type="match status" value="1"/>
</dbReference>
<dbReference type="Pfam" id="PF07859">
    <property type="entry name" value="Abhydrolase_3"/>
    <property type="match status" value="1"/>
</dbReference>
<dbReference type="SUPFAM" id="SSF53474">
    <property type="entry name" value="alpha/beta-Hydrolases"/>
    <property type="match status" value="1"/>
</dbReference>
<dbReference type="PROSITE" id="PS01173">
    <property type="entry name" value="LIPASE_GDXG_HIS"/>
    <property type="match status" value="1"/>
</dbReference>
<dbReference type="PROSITE" id="PS01174">
    <property type="entry name" value="LIPASE_GDXG_SER"/>
    <property type="match status" value="1"/>
</dbReference>
<feature type="chain" id="PRO_1000188989" description="Acetyl esterase">
    <location>
        <begin position="1"/>
        <end position="319"/>
    </location>
</feature>
<feature type="short sequence motif" description="Involved in the stabilization of the negatively charged intermediate by the formation of the oxyanion hole" evidence="1">
    <location>
        <begin position="91"/>
        <end position="93"/>
    </location>
</feature>
<feature type="active site" evidence="2">
    <location>
        <position position="165"/>
    </location>
</feature>
<feature type="active site" evidence="2">
    <location>
        <position position="262"/>
    </location>
</feature>
<feature type="active site" evidence="2">
    <location>
        <position position="292"/>
    </location>
</feature>
<name>AES_ECOUT</name>
<reference key="1">
    <citation type="journal article" date="2006" name="Proc. Natl. Acad. Sci. U.S.A.">
        <title>Identification of genes subject to positive selection in uropathogenic strains of Escherichia coli: a comparative genomics approach.</title>
        <authorList>
            <person name="Chen S.L."/>
            <person name="Hung C.-S."/>
            <person name="Xu J."/>
            <person name="Reigstad C.S."/>
            <person name="Magrini V."/>
            <person name="Sabo A."/>
            <person name="Blasiar D."/>
            <person name="Bieri T."/>
            <person name="Meyer R.R."/>
            <person name="Ozersky P."/>
            <person name="Armstrong J.R."/>
            <person name="Fulton R.S."/>
            <person name="Latreille J.P."/>
            <person name="Spieth J."/>
            <person name="Hooton T.M."/>
            <person name="Mardis E.R."/>
            <person name="Hultgren S.J."/>
            <person name="Gordon J.I."/>
        </authorList>
    </citation>
    <scope>NUCLEOTIDE SEQUENCE [LARGE SCALE GENOMIC DNA]</scope>
    <source>
        <strain>UTI89 / UPEC</strain>
    </source>
</reference>
<sequence length="319" mass="36083">MKPENKLPVLDLISAEMKTVVNTLQPDLPPWPATGAIAEQRQYYTLERRFWNVGAPEMATRAYRVPTKYGQVKTRLFYPQPDSPATLFYLHGGGFILGNLDTHDRIMRLLASYSQCTVIGIDYTLSPEARFPQAIEEIVAACCYFHQQAEDYQINMSRIGFAGDSAGAMLALASALWLRDKQIDCGKVAGVLLWYGLYGLRDSVTRRLLGGVWDGLTQQDLQMYEEAYLSNDADRESPYYCLFNNDLTREVPPCFIAGAEFDPLLDDSCLLYQTLAAHQQPCEFKLYSGMLHAFLHYSRMMKTADEALRDGAQFFTAQL</sequence>